<protein>
    <recommendedName>
        <fullName evidence="1">Xanthine phosphoribosyltransferase</fullName>
        <shortName evidence="1">XPRTase</shortName>
        <ecNumber evidence="1">2.4.2.22</ecNumber>
    </recommendedName>
</protein>
<evidence type="ECO:0000255" key="1">
    <source>
        <dbReference type="HAMAP-Rule" id="MF_01184"/>
    </source>
</evidence>
<dbReference type="EC" id="2.4.2.22" evidence="1"/>
<dbReference type="EMBL" id="AP007281">
    <property type="protein sequence ID" value="BAG25874.1"/>
    <property type="molecule type" value="Genomic_DNA"/>
</dbReference>
<dbReference type="RefSeq" id="WP_003668766.1">
    <property type="nucleotide sequence ID" value="NC_010609.1"/>
</dbReference>
<dbReference type="SMR" id="B2G8U2"/>
<dbReference type="KEGG" id="lrf:LAR_1358"/>
<dbReference type="HOGENOM" id="CLU_099015_0_0_9"/>
<dbReference type="UniPathway" id="UPA00602">
    <property type="reaction ID" value="UER00658"/>
</dbReference>
<dbReference type="GO" id="GO:0005737">
    <property type="term" value="C:cytoplasm"/>
    <property type="evidence" value="ECO:0007669"/>
    <property type="project" value="UniProtKB-SubCell"/>
</dbReference>
<dbReference type="GO" id="GO:0000310">
    <property type="term" value="F:xanthine phosphoribosyltransferase activity"/>
    <property type="evidence" value="ECO:0007669"/>
    <property type="project" value="UniProtKB-UniRule"/>
</dbReference>
<dbReference type="GO" id="GO:0006166">
    <property type="term" value="P:purine ribonucleoside salvage"/>
    <property type="evidence" value="ECO:0007669"/>
    <property type="project" value="UniProtKB-KW"/>
</dbReference>
<dbReference type="GO" id="GO:0046110">
    <property type="term" value="P:xanthine metabolic process"/>
    <property type="evidence" value="ECO:0007669"/>
    <property type="project" value="InterPro"/>
</dbReference>
<dbReference type="GO" id="GO:0032265">
    <property type="term" value="P:XMP salvage"/>
    <property type="evidence" value="ECO:0007669"/>
    <property type="project" value="UniProtKB-UniRule"/>
</dbReference>
<dbReference type="CDD" id="cd06223">
    <property type="entry name" value="PRTases_typeI"/>
    <property type="match status" value="1"/>
</dbReference>
<dbReference type="Gene3D" id="3.40.50.2020">
    <property type="match status" value="1"/>
</dbReference>
<dbReference type="HAMAP" id="MF_01184">
    <property type="entry name" value="XPRTase"/>
    <property type="match status" value="1"/>
</dbReference>
<dbReference type="InterPro" id="IPR000836">
    <property type="entry name" value="PRibTrfase_dom"/>
</dbReference>
<dbReference type="InterPro" id="IPR029057">
    <property type="entry name" value="PRTase-like"/>
</dbReference>
<dbReference type="InterPro" id="IPR050118">
    <property type="entry name" value="Pur/Pyrimidine_PRTase"/>
</dbReference>
<dbReference type="InterPro" id="IPR010079">
    <property type="entry name" value="Xanthine_PRibTrfase"/>
</dbReference>
<dbReference type="NCBIfam" id="NF006671">
    <property type="entry name" value="PRK09219.1"/>
    <property type="match status" value="1"/>
</dbReference>
<dbReference type="NCBIfam" id="TIGR01744">
    <property type="entry name" value="XPRTase"/>
    <property type="match status" value="1"/>
</dbReference>
<dbReference type="PANTHER" id="PTHR43864">
    <property type="entry name" value="HYPOXANTHINE/GUANINE PHOSPHORIBOSYLTRANSFERASE"/>
    <property type="match status" value="1"/>
</dbReference>
<dbReference type="PANTHER" id="PTHR43864:SF1">
    <property type="entry name" value="XANTHINE PHOSPHORIBOSYLTRANSFERASE"/>
    <property type="match status" value="1"/>
</dbReference>
<dbReference type="SUPFAM" id="SSF53271">
    <property type="entry name" value="PRTase-like"/>
    <property type="match status" value="1"/>
</dbReference>
<reference key="1">
    <citation type="journal article" date="2008" name="DNA Res.">
        <title>Comparative genome analysis of Lactobacillus reuteri and Lactobacillus fermentum reveal a genomic island for reuterin and cobalamin production.</title>
        <authorList>
            <person name="Morita H."/>
            <person name="Toh H."/>
            <person name="Fukuda S."/>
            <person name="Horikawa H."/>
            <person name="Oshima K."/>
            <person name="Suzuki T."/>
            <person name="Murakami M."/>
            <person name="Hisamatsu S."/>
            <person name="Kato Y."/>
            <person name="Takizawa T."/>
            <person name="Fukuoka H."/>
            <person name="Yoshimura T."/>
            <person name="Itoh K."/>
            <person name="O'Sullivan D.J."/>
            <person name="McKay L.L."/>
            <person name="Ohno H."/>
            <person name="Kikuchi J."/>
            <person name="Masaoka T."/>
            <person name="Hattori M."/>
        </authorList>
    </citation>
    <scope>NUCLEOTIDE SEQUENCE [LARGE SCALE GENOMIC DNA]</scope>
    <source>
        <strain>JCM 1112</strain>
    </source>
</reference>
<feature type="chain" id="PRO_1000138240" description="Xanthine phosphoribosyltransferase">
    <location>
        <begin position="1"/>
        <end position="191"/>
    </location>
</feature>
<feature type="binding site" evidence="1">
    <location>
        <position position="20"/>
    </location>
    <ligand>
        <name>xanthine</name>
        <dbReference type="ChEBI" id="CHEBI:17712"/>
    </ligand>
</feature>
<feature type="binding site" evidence="1">
    <location>
        <position position="27"/>
    </location>
    <ligand>
        <name>xanthine</name>
        <dbReference type="ChEBI" id="CHEBI:17712"/>
    </ligand>
</feature>
<feature type="binding site" evidence="1">
    <location>
        <begin position="128"/>
        <end position="132"/>
    </location>
    <ligand>
        <name>5-phospho-alpha-D-ribose 1-diphosphate</name>
        <dbReference type="ChEBI" id="CHEBI:58017"/>
    </ligand>
</feature>
<feature type="binding site" evidence="1">
    <location>
        <position position="156"/>
    </location>
    <ligand>
        <name>xanthine</name>
        <dbReference type="ChEBI" id="CHEBI:17712"/>
    </ligand>
</feature>
<sequence length="191" mass="21113">MKELEEKIKEYGTVLPGNVLKVDAFLNHQVDPQLMLHIGQKFAKLFANEGITKIWTVESSGIAPAVMTGLEMNLPVIFARKHKSLTLNQNMYTADVYSYTKKTTNRISISKKYVDADDKILMIDDFLANGQAVEGLLEIADQAGVQVAGAGIVIEKSFQPGAGELKERGIRVESLARIQSLSDNKVEFVKD</sequence>
<accession>B2G8U2</accession>
<proteinExistence type="inferred from homology"/>
<organism>
    <name type="scientific">Limosilactobacillus reuteri subsp. reuteri (strain JCM 1112)</name>
    <name type="common">Lactobacillus reuteri</name>
    <dbReference type="NCBI Taxonomy" id="557433"/>
    <lineage>
        <taxon>Bacteria</taxon>
        <taxon>Bacillati</taxon>
        <taxon>Bacillota</taxon>
        <taxon>Bacilli</taxon>
        <taxon>Lactobacillales</taxon>
        <taxon>Lactobacillaceae</taxon>
        <taxon>Limosilactobacillus</taxon>
    </lineage>
</organism>
<keyword id="KW-0963">Cytoplasm</keyword>
<keyword id="KW-0328">Glycosyltransferase</keyword>
<keyword id="KW-0660">Purine salvage</keyword>
<keyword id="KW-0808">Transferase</keyword>
<gene>
    <name evidence="1" type="primary">xpt</name>
    <name type="ordered locus">LAR_1358</name>
</gene>
<comment type="function">
    <text evidence="1">Converts the preformed base xanthine, a product of nucleic acid breakdown, to xanthosine 5'-monophosphate (XMP), so it can be reused for RNA or DNA synthesis.</text>
</comment>
<comment type="catalytic activity">
    <reaction evidence="1">
        <text>XMP + diphosphate = xanthine + 5-phospho-alpha-D-ribose 1-diphosphate</text>
        <dbReference type="Rhea" id="RHEA:10800"/>
        <dbReference type="ChEBI" id="CHEBI:17712"/>
        <dbReference type="ChEBI" id="CHEBI:33019"/>
        <dbReference type="ChEBI" id="CHEBI:57464"/>
        <dbReference type="ChEBI" id="CHEBI:58017"/>
        <dbReference type="EC" id="2.4.2.22"/>
    </reaction>
</comment>
<comment type="pathway">
    <text evidence="1">Purine metabolism; XMP biosynthesis via salvage pathway; XMP from xanthine: step 1/1.</text>
</comment>
<comment type="subunit">
    <text evidence="1">Homodimer.</text>
</comment>
<comment type="subcellular location">
    <subcellularLocation>
        <location evidence="1">Cytoplasm</location>
    </subcellularLocation>
</comment>
<comment type="similarity">
    <text evidence="1">Belongs to the purine/pyrimidine phosphoribosyltransferase family. Xpt subfamily.</text>
</comment>
<name>XPT_LIMRJ</name>